<comment type="similarity">
    <text evidence="1">Belongs to the bacterial ribosomal protein bL33 family.</text>
</comment>
<name>RL33_SYNJB</name>
<evidence type="ECO:0000255" key="1">
    <source>
        <dbReference type="HAMAP-Rule" id="MF_00294"/>
    </source>
</evidence>
<evidence type="ECO:0000305" key="2"/>
<feature type="chain" id="PRO_1000004198" description="Large ribosomal subunit protein bL33">
    <location>
        <begin position="1"/>
        <end position="64"/>
    </location>
</feature>
<organism>
    <name type="scientific">Synechococcus sp. (strain JA-2-3B'a(2-13))</name>
    <name type="common">Cyanobacteria bacterium Yellowstone B-Prime</name>
    <dbReference type="NCBI Taxonomy" id="321332"/>
    <lineage>
        <taxon>Bacteria</taxon>
        <taxon>Bacillati</taxon>
        <taxon>Cyanobacteriota</taxon>
        <taxon>Cyanophyceae</taxon>
        <taxon>Synechococcales</taxon>
        <taxon>Synechococcaceae</taxon>
        <taxon>Synechococcus</taxon>
    </lineage>
</organism>
<gene>
    <name evidence="1" type="primary">rpmG</name>
    <name evidence="1" type="synonym">rpl33</name>
    <name type="ordered locus">CYB_1634</name>
</gene>
<sequence length="64" mass="7439">MAKAKGARIIITLECTECRTNVNKRSPGVNRYTTTKNRRNTTARLELKKFCPHCNRHTVHKEIK</sequence>
<proteinExistence type="inferred from homology"/>
<accession>Q2JL27</accession>
<reference key="1">
    <citation type="journal article" date="2007" name="ISME J.">
        <title>Population level functional diversity in a microbial community revealed by comparative genomic and metagenomic analyses.</title>
        <authorList>
            <person name="Bhaya D."/>
            <person name="Grossman A.R."/>
            <person name="Steunou A.-S."/>
            <person name="Khuri N."/>
            <person name="Cohan F.M."/>
            <person name="Hamamura N."/>
            <person name="Melendrez M.C."/>
            <person name="Bateson M.M."/>
            <person name="Ward D.M."/>
            <person name="Heidelberg J.F."/>
        </authorList>
    </citation>
    <scope>NUCLEOTIDE SEQUENCE [LARGE SCALE GENOMIC DNA]</scope>
    <source>
        <strain>JA-2-3B'a(2-13)</strain>
    </source>
</reference>
<protein>
    <recommendedName>
        <fullName evidence="1">Large ribosomal subunit protein bL33</fullName>
    </recommendedName>
    <alternativeName>
        <fullName evidence="2">50S ribosomal protein L33</fullName>
    </alternativeName>
</protein>
<dbReference type="EMBL" id="CP000240">
    <property type="protein sequence ID" value="ABD02595.1"/>
    <property type="molecule type" value="Genomic_DNA"/>
</dbReference>
<dbReference type="RefSeq" id="WP_011433240.1">
    <property type="nucleotide sequence ID" value="NC_007776.1"/>
</dbReference>
<dbReference type="STRING" id="321332.CYB_1634"/>
<dbReference type="KEGG" id="cyb:CYB_1634"/>
<dbReference type="eggNOG" id="COG0267">
    <property type="taxonomic scope" value="Bacteria"/>
</dbReference>
<dbReference type="HOGENOM" id="CLU_190949_3_0_3"/>
<dbReference type="Proteomes" id="UP000001938">
    <property type="component" value="Chromosome"/>
</dbReference>
<dbReference type="GO" id="GO:0005737">
    <property type="term" value="C:cytoplasm"/>
    <property type="evidence" value="ECO:0007669"/>
    <property type="project" value="UniProtKB-ARBA"/>
</dbReference>
<dbReference type="GO" id="GO:1990904">
    <property type="term" value="C:ribonucleoprotein complex"/>
    <property type="evidence" value="ECO:0007669"/>
    <property type="project" value="UniProtKB-KW"/>
</dbReference>
<dbReference type="GO" id="GO:0005840">
    <property type="term" value="C:ribosome"/>
    <property type="evidence" value="ECO:0007669"/>
    <property type="project" value="UniProtKB-KW"/>
</dbReference>
<dbReference type="GO" id="GO:0003735">
    <property type="term" value="F:structural constituent of ribosome"/>
    <property type="evidence" value="ECO:0007669"/>
    <property type="project" value="InterPro"/>
</dbReference>
<dbReference type="GO" id="GO:0006412">
    <property type="term" value="P:translation"/>
    <property type="evidence" value="ECO:0007669"/>
    <property type="project" value="UniProtKB-UniRule"/>
</dbReference>
<dbReference type="Gene3D" id="2.20.28.120">
    <property type="entry name" value="Ribosomal protein L33"/>
    <property type="match status" value="1"/>
</dbReference>
<dbReference type="HAMAP" id="MF_00294">
    <property type="entry name" value="Ribosomal_bL33"/>
    <property type="match status" value="1"/>
</dbReference>
<dbReference type="InterPro" id="IPR001705">
    <property type="entry name" value="Ribosomal_bL33"/>
</dbReference>
<dbReference type="InterPro" id="IPR018264">
    <property type="entry name" value="Ribosomal_bL33_CS"/>
</dbReference>
<dbReference type="InterPro" id="IPR038584">
    <property type="entry name" value="Ribosomal_bL33_sf"/>
</dbReference>
<dbReference type="InterPro" id="IPR011332">
    <property type="entry name" value="Ribosomal_zn-bd"/>
</dbReference>
<dbReference type="NCBIfam" id="NF001764">
    <property type="entry name" value="PRK00504.1"/>
    <property type="match status" value="1"/>
</dbReference>
<dbReference type="NCBIfam" id="NF001860">
    <property type="entry name" value="PRK00595.1"/>
    <property type="match status" value="1"/>
</dbReference>
<dbReference type="NCBIfam" id="TIGR01023">
    <property type="entry name" value="rpmG_bact"/>
    <property type="match status" value="1"/>
</dbReference>
<dbReference type="PANTHER" id="PTHR43168">
    <property type="entry name" value="50S RIBOSOMAL PROTEIN L33, CHLOROPLASTIC"/>
    <property type="match status" value="1"/>
</dbReference>
<dbReference type="PANTHER" id="PTHR43168:SF2">
    <property type="entry name" value="LARGE RIBOSOMAL SUBUNIT PROTEIN BL33C"/>
    <property type="match status" value="1"/>
</dbReference>
<dbReference type="Pfam" id="PF00471">
    <property type="entry name" value="Ribosomal_L33"/>
    <property type="match status" value="1"/>
</dbReference>
<dbReference type="SUPFAM" id="SSF57829">
    <property type="entry name" value="Zn-binding ribosomal proteins"/>
    <property type="match status" value="1"/>
</dbReference>
<dbReference type="PROSITE" id="PS00582">
    <property type="entry name" value="RIBOSOMAL_L33"/>
    <property type="match status" value="1"/>
</dbReference>
<keyword id="KW-1185">Reference proteome</keyword>
<keyword id="KW-0687">Ribonucleoprotein</keyword>
<keyword id="KW-0689">Ribosomal protein</keyword>